<gene>
    <name evidence="1" type="primary">cca</name>
    <name type="ordered locus">YPO0650</name>
    <name type="ordered locus">y3529</name>
    <name type="ordered locus">YP_2965</name>
</gene>
<sequence length="412" mass="46289">MNIYLVGGAVRDSLLNLPVTEQDWVVVGATPEQLLKLGYQQVGKDFPVFLHPVSHEEYALARTERKSGQGYTGFTCYAAPDVTLEDDLLRRDLTVNAIARSADGEFIDPYHGKQDLENRVLRHVSDAFGEDPLRVLRVARFAARFAYLGFTIAPETMSLMSNMAQSGELSALTPERVWKETEKALKTQSPHVYFQVLRDCGALAVLFPEIERLFGVPAPEKWHPEIDTGIHTLMTLAIAAQLSPEVDIRFAALCHDLGKGLTPKEHWPHHHGHGPAGVKLVEQLCQRLRIPNPVRDLAKLVAEYHDLIHTVNKLRPETLLKLFNAIDVWRKPERLEQMIMTSEADARGRTGFENNPYPQGDYLRAAFQIANGVSIQEVVASGLQGLAIRDELQRRRQQALAEWKQTQETASI</sequence>
<protein>
    <recommendedName>
        <fullName evidence="1">Multifunctional CCA protein</fullName>
    </recommendedName>
    <domain>
        <recommendedName>
            <fullName evidence="1">CCA-adding enzyme</fullName>
            <ecNumber evidence="1">2.7.7.72</ecNumber>
        </recommendedName>
        <alternativeName>
            <fullName evidence="1">CCA tRNA nucleotidyltransferase</fullName>
        </alternativeName>
        <alternativeName>
            <fullName evidence="1">tRNA CCA-pyrophosphorylase</fullName>
        </alternativeName>
        <alternativeName>
            <fullName evidence="1">tRNA adenylyl-/cytidylyl-transferase</fullName>
        </alternativeName>
        <alternativeName>
            <fullName evidence="1">tRNA nucleotidyltransferase</fullName>
        </alternativeName>
        <alternativeName>
            <fullName evidence="1">tRNA-NT</fullName>
        </alternativeName>
    </domain>
    <domain>
        <recommendedName>
            <fullName evidence="1">2'-nucleotidase</fullName>
            <ecNumber evidence="1">3.1.3.-</ecNumber>
        </recommendedName>
    </domain>
    <domain>
        <recommendedName>
            <fullName evidence="1">2',3'-cyclic phosphodiesterase</fullName>
            <ecNumber evidence="1">3.1.4.-</ecNumber>
        </recommendedName>
    </domain>
    <domain>
        <recommendedName>
            <fullName evidence="1">Phosphatase</fullName>
            <ecNumber evidence="1">3.1.3.-</ecNumber>
        </recommendedName>
    </domain>
</protein>
<feature type="chain" id="PRO_0000139011" description="Multifunctional CCA protein">
    <location>
        <begin position="1"/>
        <end position="412"/>
    </location>
</feature>
<feature type="domain" description="HD" evidence="1">
    <location>
        <begin position="228"/>
        <end position="329"/>
    </location>
</feature>
<feature type="binding site" evidence="1">
    <location>
        <position position="8"/>
    </location>
    <ligand>
        <name>ATP</name>
        <dbReference type="ChEBI" id="CHEBI:30616"/>
    </ligand>
</feature>
<feature type="binding site" evidence="1">
    <location>
        <position position="8"/>
    </location>
    <ligand>
        <name>CTP</name>
        <dbReference type="ChEBI" id="CHEBI:37563"/>
    </ligand>
</feature>
<feature type="binding site" evidence="1">
    <location>
        <position position="11"/>
    </location>
    <ligand>
        <name>ATP</name>
        <dbReference type="ChEBI" id="CHEBI:30616"/>
    </ligand>
</feature>
<feature type="binding site" evidence="1">
    <location>
        <position position="11"/>
    </location>
    <ligand>
        <name>CTP</name>
        <dbReference type="ChEBI" id="CHEBI:37563"/>
    </ligand>
</feature>
<feature type="binding site" evidence="1">
    <location>
        <position position="21"/>
    </location>
    <ligand>
        <name>Mg(2+)</name>
        <dbReference type="ChEBI" id="CHEBI:18420"/>
    </ligand>
</feature>
<feature type="binding site" evidence="1">
    <location>
        <position position="23"/>
    </location>
    <ligand>
        <name>Mg(2+)</name>
        <dbReference type="ChEBI" id="CHEBI:18420"/>
    </ligand>
</feature>
<feature type="binding site" evidence="1">
    <location>
        <position position="91"/>
    </location>
    <ligand>
        <name>ATP</name>
        <dbReference type="ChEBI" id="CHEBI:30616"/>
    </ligand>
</feature>
<feature type="binding site" evidence="1">
    <location>
        <position position="91"/>
    </location>
    <ligand>
        <name>CTP</name>
        <dbReference type="ChEBI" id="CHEBI:37563"/>
    </ligand>
</feature>
<feature type="binding site" evidence="1">
    <location>
        <position position="137"/>
    </location>
    <ligand>
        <name>ATP</name>
        <dbReference type="ChEBI" id="CHEBI:30616"/>
    </ligand>
</feature>
<feature type="binding site" evidence="1">
    <location>
        <position position="137"/>
    </location>
    <ligand>
        <name>CTP</name>
        <dbReference type="ChEBI" id="CHEBI:37563"/>
    </ligand>
</feature>
<feature type="binding site" evidence="1">
    <location>
        <position position="140"/>
    </location>
    <ligand>
        <name>ATP</name>
        <dbReference type="ChEBI" id="CHEBI:30616"/>
    </ligand>
</feature>
<feature type="binding site" evidence="1">
    <location>
        <position position="140"/>
    </location>
    <ligand>
        <name>CTP</name>
        <dbReference type="ChEBI" id="CHEBI:37563"/>
    </ligand>
</feature>
<accession>Q8ZI64</accession>
<accession>Q0WJ20</accession>
<accession>Q74RQ7</accession>
<accession>Q7CGG6</accession>
<proteinExistence type="inferred from homology"/>
<comment type="function">
    <text evidence="1">Catalyzes the addition and repair of the essential 3'-terminal CCA sequence in tRNAs without using a nucleic acid template. Adds these three nucleotides in the order of C, C, and A to the tRNA nucleotide-73, using CTP and ATP as substrates and producing inorganic pyrophosphate. tRNA 3'-terminal CCA addition is required both for tRNA processing and repair. Also involved in tRNA surveillance by mediating tandem CCA addition to generate a CCACCA at the 3' terminus of unstable tRNAs. While stable tRNAs receive only 3'-terminal CCA, unstable tRNAs are marked with CCACCA and rapidly degraded.</text>
</comment>
<comment type="catalytic activity">
    <reaction evidence="1">
        <text>a tRNA precursor + 2 CTP + ATP = a tRNA with a 3' CCA end + 3 diphosphate</text>
        <dbReference type="Rhea" id="RHEA:14433"/>
        <dbReference type="Rhea" id="RHEA-COMP:10465"/>
        <dbReference type="Rhea" id="RHEA-COMP:10468"/>
        <dbReference type="ChEBI" id="CHEBI:30616"/>
        <dbReference type="ChEBI" id="CHEBI:33019"/>
        <dbReference type="ChEBI" id="CHEBI:37563"/>
        <dbReference type="ChEBI" id="CHEBI:74896"/>
        <dbReference type="ChEBI" id="CHEBI:83071"/>
        <dbReference type="EC" id="2.7.7.72"/>
    </reaction>
</comment>
<comment type="catalytic activity">
    <reaction evidence="1">
        <text>a tRNA with a 3' CCA end + 2 CTP + ATP = a tRNA with a 3' CCACCA end + 3 diphosphate</text>
        <dbReference type="Rhea" id="RHEA:76235"/>
        <dbReference type="Rhea" id="RHEA-COMP:10468"/>
        <dbReference type="Rhea" id="RHEA-COMP:18655"/>
        <dbReference type="ChEBI" id="CHEBI:30616"/>
        <dbReference type="ChEBI" id="CHEBI:33019"/>
        <dbReference type="ChEBI" id="CHEBI:37563"/>
        <dbReference type="ChEBI" id="CHEBI:83071"/>
        <dbReference type="ChEBI" id="CHEBI:195187"/>
    </reaction>
    <physiologicalReaction direction="left-to-right" evidence="1">
        <dbReference type="Rhea" id="RHEA:76236"/>
    </physiologicalReaction>
</comment>
<comment type="cofactor">
    <cofactor evidence="1">
        <name>Mg(2+)</name>
        <dbReference type="ChEBI" id="CHEBI:18420"/>
    </cofactor>
    <text evidence="1">Magnesium is required for nucleotidyltransferase activity.</text>
</comment>
<comment type="cofactor">
    <cofactor evidence="1">
        <name>Ni(2+)</name>
        <dbReference type="ChEBI" id="CHEBI:49786"/>
    </cofactor>
    <text evidence="1">Nickel for phosphatase activity.</text>
</comment>
<comment type="subunit">
    <text evidence="1">Monomer. Can also form homodimers and oligomers.</text>
</comment>
<comment type="domain">
    <text evidence="1">Comprises two domains: an N-terminal domain containing the nucleotidyltransferase activity and a C-terminal HD domain associated with both phosphodiesterase and phosphatase activities.</text>
</comment>
<comment type="miscellaneous">
    <text evidence="1">A single active site specifically recognizes both ATP and CTP and is responsible for their addition.</text>
</comment>
<comment type="similarity">
    <text evidence="1">Belongs to the tRNA nucleotidyltransferase/poly(A) polymerase family. Bacterial CCA-adding enzyme type 1 subfamily.</text>
</comment>
<name>CCA_YERPE</name>
<dbReference type="EC" id="2.7.7.72" evidence="1"/>
<dbReference type="EC" id="3.1.3.-" evidence="1"/>
<dbReference type="EC" id="3.1.4.-" evidence="1"/>
<dbReference type="EMBL" id="AL590842">
    <property type="protein sequence ID" value="CAL19327.1"/>
    <property type="molecule type" value="Genomic_DNA"/>
</dbReference>
<dbReference type="EMBL" id="AE009952">
    <property type="protein sequence ID" value="AAM87077.1"/>
    <property type="molecule type" value="Genomic_DNA"/>
</dbReference>
<dbReference type="EMBL" id="AE017042">
    <property type="protein sequence ID" value="AAS63144.1"/>
    <property type="molecule type" value="Genomic_DNA"/>
</dbReference>
<dbReference type="PIR" id="AE0080">
    <property type="entry name" value="AE0080"/>
</dbReference>
<dbReference type="RefSeq" id="WP_002212197.1">
    <property type="nucleotide sequence ID" value="NZ_WUCM01000022.1"/>
</dbReference>
<dbReference type="RefSeq" id="YP_002345718.1">
    <property type="nucleotide sequence ID" value="NC_003143.1"/>
</dbReference>
<dbReference type="SMR" id="Q8ZI64"/>
<dbReference type="IntAct" id="Q8ZI64">
    <property type="interactions" value="4"/>
</dbReference>
<dbReference type="STRING" id="214092.YPO0650"/>
<dbReference type="PaxDb" id="214092-YPO0650"/>
<dbReference type="DNASU" id="1148476"/>
<dbReference type="EnsemblBacteria" id="AAS63144">
    <property type="protein sequence ID" value="AAS63144"/>
    <property type="gene ID" value="YP_2965"/>
</dbReference>
<dbReference type="KEGG" id="ype:YPO0650"/>
<dbReference type="KEGG" id="ypk:y3529"/>
<dbReference type="KEGG" id="ypm:YP_2965"/>
<dbReference type="PATRIC" id="fig|214092.21.peg.909"/>
<dbReference type="eggNOG" id="COG0617">
    <property type="taxonomic scope" value="Bacteria"/>
</dbReference>
<dbReference type="HOGENOM" id="CLU_015961_1_1_6"/>
<dbReference type="OMA" id="GWTFHGH"/>
<dbReference type="OrthoDB" id="9805698at2"/>
<dbReference type="Proteomes" id="UP000000815">
    <property type="component" value="Chromosome"/>
</dbReference>
<dbReference type="Proteomes" id="UP000001019">
    <property type="component" value="Chromosome"/>
</dbReference>
<dbReference type="Proteomes" id="UP000002490">
    <property type="component" value="Chromosome"/>
</dbReference>
<dbReference type="GO" id="GO:0005524">
    <property type="term" value="F:ATP binding"/>
    <property type="evidence" value="ECO:0007669"/>
    <property type="project" value="UniProtKB-UniRule"/>
</dbReference>
<dbReference type="GO" id="GO:0004810">
    <property type="term" value="F:CCA tRNA nucleotidyltransferase activity"/>
    <property type="evidence" value="ECO:0007669"/>
    <property type="project" value="UniProtKB-UniRule"/>
</dbReference>
<dbReference type="GO" id="GO:0160016">
    <property type="term" value="F:CCACCA tRNA nucleotidyltransferase activity"/>
    <property type="evidence" value="ECO:0000318"/>
    <property type="project" value="GO_Central"/>
</dbReference>
<dbReference type="GO" id="GO:0004112">
    <property type="term" value="F:cyclic-nucleotide phosphodiesterase activity"/>
    <property type="evidence" value="ECO:0007669"/>
    <property type="project" value="UniProtKB-UniRule"/>
</dbReference>
<dbReference type="GO" id="GO:0000287">
    <property type="term" value="F:magnesium ion binding"/>
    <property type="evidence" value="ECO:0007669"/>
    <property type="project" value="UniProtKB-UniRule"/>
</dbReference>
<dbReference type="GO" id="GO:0016791">
    <property type="term" value="F:phosphatase activity"/>
    <property type="evidence" value="ECO:0007669"/>
    <property type="project" value="UniProtKB-UniRule"/>
</dbReference>
<dbReference type="GO" id="GO:0000049">
    <property type="term" value="F:tRNA binding"/>
    <property type="evidence" value="ECO:0007669"/>
    <property type="project" value="UniProtKB-UniRule"/>
</dbReference>
<dbReference type="GO" id="GO:0042245">
    <property type="term" value="P:RNA repair"/>
    <property type="evidence" value="ECO:0007669"/>
    <property type="project" value="UniProtKB-KW"/>
</dbReference>
<dbReference type="GO" id="GO:0001680">
    <property type="term" value="P:tRNA 3'-terminal CCA addition"/>
    <property type="evidence" value="ECO:0000318"/>
    <property type="project" value="GO_Central"/>
</dbReference>
<dbReference type="GO" id="GO:0106354">
    <property type="term" value="P:tRNA surveillance"/>
    <property type="evidence" value="ECO:0000318"/>
    <property type="project" value="GO_Central"/>
</dbReference>
<dbReference type="CDD" id="cd00077">
    <property type="entry name" value="HDc"/>
    <property type="match status" value="1"/>
</dbReference>
<dbReference type="CDD" id="cd05398">
    <property type="entry name" value="NT_ClassII-CCAase"/>
    <property type="match status" value="1"/>
</dbReference>
<dbReference type="FunFam" id="1.10.3090.10:FF:000001">
    <property type="entry name" value="Multifunctional CCA protein"/>
    <property type="match status" value="1"/>
</dbReference>
<dbReference type="FunFam" id="3.30.460.10:FF:000016">
    <property type="entry name" value="Multifunctional CCA protein"/>
    <property type="match status" value="1"/>
</dbReference>
<dbReference type="Gene3D" id="3.30.460.10">
    <property type="entry name" value="Beta Polymerase, domain 2"/>
    <property type="match status" value="1"/>
</dbReference>
<dbReference type="Gene3D" id="1.10.3090.10">
    <property type="entry name" value="cca-adding enzyme, domain 2"/>
    <property type="match status" value="1"/>
</dbReference>
<dbReference type="HAMAP" id="MF_01261">
    <property type="entry name" value="CCA_bact_type1"/>
    <property type="match status" value="1"/>
</dbReference>
<dbReference type="HAMAP" id="MF_01262">
    <property type="entry name" value="CCA_bact_type2"/>
    <property type="match status" value="1"/>
</dbReference>
<dbReference type="InterPro" id="IPR012006">
    <property type="entry name" value="CCA_bact"/>
</dbReference>
<dbReference type="InterPro" id="IPR003607">
    <property type="entry name" value="HD/PDEase_dom"/>
</dbReference>
<dbReference type="InterPro" id="IPR006674">
    <property type="entry name" value="HD_domain"/>
</dbReference>
<dbReference type="InterPro" id="IPR043519">
    <property type="entry name" value="NT_sf"/>
</dbReference>
<dbReference type="InterPro" id="IPR002646">
    <property type="entry name" value="PolA_pol_head_dom"/>
</dbReference>
<dbReference type="InterPro" id="IPR032828">
    <property type="entry name" value="PolyA_RNA-bd"/>
</dbReference>
<dbReference type="InterPro" id="IPR050124">
    <property type="entry name" value="tRNA_CCA-adding_enzyme"/>
</dbReference>
<dbReference type="NCBIfam" id="NF008137">
    <property type="entry name" value="PRK10885.1"/>
    <property type="match status" value="1"/>
</dbReference>
<dbReference type="PANTHER" id="PTHR47545">
    <property type="entry name" value="MULTIFUNCTIONAL CCA PROTEIN"/>
    <property type="match status" value="1"/>
</dbReference>
<dbReference type="PANTHER" id="PTHR47545:SF1">
    <property type="entry name" value="MULTIFUNCTIONAL CCA PROTEIN"/>
    <property type="match status" value="1"/>
</dbReference>
<dbReference type="Pfam" id="PF01966">
    <property type="entry name" value="HD"/>
    <property type="match status" value="1"/>
</dbReference>
<dbReference type="Pfam" id="PF01743">
    <property type="entry name" value="PolyA_pol"/>
    <property type="match status" value="1"/>
</dbReference>
<dbReference type="Pfam" id="PF12627">
    <property type="entry name" value="PolyA_pol_RNAbd"/>
    <property type="match status" value="1"/>
</dbReference>
<dbReference type="PIRSF" id="PIRSF000813">
    <property type="entry name" value="CCA_bact"/>
    <property type="match status" value="1"/>
</dbReference>
<dbReference type="SMART" id="SM00471">
    <property type="entry name" value="HDc"/>
    <property type="match status" value="1"/>
</dbReference>
<dbReference type="SUPFAM" id="SSF81301">
    <property type="entry name" value="Nucleotidyltransferase"/>
    <property type="match status" value="1"/>
</dbReference>
<dbReference type="SUPFAM" id="SSF81891">
    <property type="entry name" value="Poly A polymerase C-terminal region-like"/>
    <property type="match status" value="1"/>
</dbReference>
<dbReference type="PROSITE" id="PS51831">
    <property type="entry name" value="HD"/>
    <property type="match status" value="1"/>
</dbReference>
<evidence type="ECO:0000255" key="1">
    <source>
        <dbReference type="HAMAP-Rule" id="MF_01261"/>
    </source>
</evidence>
<keyword id="KW-0067">ATP-binding</keyword>
<keyword id="KW-0378">Hydrolase</keyword>
<keyword id="KW-0460">Magnesium</keyword>
<keyword id="KW-0479">Metal-binding</keyword>
<keyword id="KW-0511">Multifunctional enzyme</keyword>
<keyword id="KW-0533">Nickel</keyword>
<keyword id="KW-0547">Nucleotide-binding</keyword>
<keyword id="KW-0548">Nucleotidyltransferase</keyword>
<keyword id="KW-1185">Reference proteome</keyword>
<keyword id="KW-0692">RNA repair</keyword>
<keyword id="KW-0694">RNA-binding</keyword>
<keyword id="KW-0808">Transferase</keyword>
<keyword id="KW-0819">tRNA processing</keyword>
<organism>
    <name type="scientific">Yersinia pestis</name>
    <dbReference type="NCBI Taxonomy" id="632"/>
    <lineage>
        <taxon>Bacteria</taxon>
        <taxon>Pseudomonadati</taxon>
        <taxon>Pseudomonadota</taxon>
        <taxon>Gammaproteobacteria</taxon>
        <taxon>Enterobacterales</taxon>
        <taxon>Yersiniaceae</taxon>
        <taxon>Yersinia</taxon>
    </lineage>
</organism>
<reference key="1">
    <citation type="journal article" date="2001" name="Nature">
        <title>Genome sequence of Yersinia pestis, the causative agent of plague.</title>
        <authorList>
            <person name="Parkhill J."/>
            <person name="Wren B.W."/>
            <person name="Thomson N.R."/>
            <person name="Titball R.W."/>
            <person name="Holden M.T.G."/>
            <person name="Prentice M.B."/>
            <person name="Sebaihia M."/>
            <person name="James K.D."/>
            <person name="Churcher C.M."/>
            <person name="Mungall K.L."/>
            <person name="Baker S."/>
            <person name="Basham D."/>
            <person name="Bentley S.D."/>
            <person name="Brooks K."/>
            <person name="Cerdeno-Tarraga A.-M."/>
            <person name="Chillingworth T."/>
            <person name="Cronin A."/>
            <person name="Davies R.M."/>
            <person name="Davis P."/>
            <person name="Dougan G."/>
            <person name="Feltwell T."/>
            <person name="Hamlin N."/>
            <person name="Holroyd S."/>
            <person name="Jagels K."/>
            <person name="Karlyshev A.V."/>
            <person name="Leather S."/>
            <person name="Moule S."/>
            <person name="Oyston P.C.F."/>
            <person name="Quail M.A."/>
            <person name="Rutherford K.M."/>
            <person name="Simmonds M."/>
            <person name="Skelton J."/>
            <person name="Stevens K."/>
            <person name="Whitehead S."/>
            <person name="Barrell B.G."/>
        </authorList>
    </citation>
    <scope>NUCLEOTIDE SEQUENCE [LARGE SCALE GENOMIC DNA]</scope>
    <source>
        <strain>CO-92 / Biovar Orientalis</strain>
    </source>
</reference>
<reference key="2">
    <citation type="journal article" date="2002" name="J. Bacteriol.">
        <title>Genome sequence of Yersinia pestis KIM.</title>
        <authorList>
            <person name="Deng W."/>
            <person name="Burland V."/>
            <person name="Plunkett G. III"/>
            <person name="Boutin A."/>
            <person name="Mayhew G.F."/>
            <person name="Liss P."/>
            <person name="Perna N.T."/>
            <person name="Rose D.J."/>
            <person name="Mau B."/>
            <person name="Zhou S."/>
            <person name="Schwartz D.C."/>
            <person name="Fetherston J.D."/>
            <person name="Lindler L.E."/>
            <person name="Brubaker R.R."/>
            <person name="Plano G.V."/>
            <person name="Straley S.C."/>
            <person name="McDonough K.A."/>
            <person name="Nilles M.L."/>
            <person name="Matson J.S."/>
            <person name="Blattner F.R."/>
            <person name="Perry R.D."/>
        </authorList>
    </citation>
    <scope>NUCLEOTIDE SEQUENCE [LARGE SCALE GENOMIC DNA]</scope>
    <source>
        <strain>KIM10+ / Biovar Mediaevalis</strain>
    </source>
</reference>
<reference key="3">
    <citation type="journal article" date="2004" name="DNA Res.">
        <title>Complete genome sequence of Yersinia pestis strain 91001, an isolate avirulent to humans.</title>
        <authorList>
            <person name="Song Y."/>
            <person name="Tong Z."/>
            <person name="Wang J."/>
            <person name="Wang L."/>
            <person name="Guo Z."/>
            <person name="Han Y."/>
            <person name="Zhang J."/>
            <person name="Pei D."/>
            <person name="Zhou D."/>
            <person name="Qin H."/>
            <person name="Pang X."/>
            <person name="Han Y."/>
            <person name="Zhai J."/>
            <person name="Li M."/>
            <person name="Cui B."/>
            <person name="Qi Z."/>
            <person name="Jin L."/>
            <person name="Dai R."/>
            <person name="Chen F."/>
            <person name="Li S."/>
            <person name="Ye C."/>
            <person name="Du Z."/>
            <person name="Lin W."/>
            <person name="Wang J."/>
            <person name="Yu J."/>
            <person name="Yang H."/>
            <person name="Wang J."/>
            <person name="Huang P."/>
            <person name="Yang R."/>
        </authorList>
    </citation>
    <scope>NUCLEOTIDE SEQUENCE [LARGE SCALE GENOMIC DNA]</scope>
    <source>
        <strain>91001 / Biovar Mediaevalis</strain>
    </source>
</reference>